<dbReference type="EC" id="2.7.1.23" evidence="1"/>
<dbReference type="EMBL" id="CP000095">
    <property type="protein sequence ID" value="AAZ59011.1"/>
    <property type="molecule type" value="Genomic_DNA"/>
</dbReference>
<dbReference type="RefSeq" id="WP_011294156.1">
    <property type="nucleotide sequence ID" value="NC_007335.2"/>
</dbReference>
<dbReference type="SMR" id="Q46HL7"/>
<dbReference type="STRING" id="59920.PMN2A_1523"/>
<dbReference type="KEGG" id="pmn:PMN2A_1523"/>
<dbReference type="HOGENOM" id="CLU_008831_0_1_3"/>
<dbReference type="OrthoDB" id="9774737at2"/>
<dbReference type="PhylomeDB" id="Q46HL7"/>
<dbReference type="Proteomes" id="UP000002535">
    <property type="component" value="Chromosome"/>
</dbReference>
<dbReference type="GO" id="GO:0005737">
    <property type="term" value="C:cytoplasm"/>
    <property type="evidence" value="ECO:0007669"/>
    <property type="project" value="UniProtKB-SubCell"/>
</dbReference>
<dbReference type="GO" id="GO:0005524">
    <property type="term" value="F:ATP binding"/>
    <property type="evidence" value="ECO:0007669"/>
    <property type="project" value="UniProtKB-KW"/>
</dbReference>
<dbReference type="GO" id="GO:0046872">
    <property type="term" value="F:metal ion binding"/>
    <property type="evidence" value="ECO:0007669"/>
    <property type="project" value="UniProtKB-UniRule"/>
</dbReference>
<dbReference type="GO" id="GO:0051287">
    <property type="term" value="F:NAD binding"/>
    <property type="evidence" value="ECO:0007669"/>
    <property type="project" value="UniProtKB-ARBA"/>
</dbReference>
<dbReference type="GO" id="GO:0003951">
    <property type="term" value="F:NAD+ kinase activity"/>
    <property type="evidence" value="ECO:0007669"/>
    <property type="project" value="UniProtKB-UniRule"/>
</dbReference>
<dbReference type="GO" id="GO:0019674">
    <property type="term" value="P:NAD metabolic process"/>
    <property type="evidence" value="ECO:0007669"/>
    <property type="project" value="InterPro"/>
</dbReference>
<dbReference type="GO" id="GO:0006741">
    <property type="term" value="P:NADP biosynthetic process"/>
    <property type="evidence" value="ECO:0007669"/>
    <property type="project" value="UniProtKB-UniRule"/>
</dbReference>
<dbReference type="Gene3D" id="3.40.50.10330">
    <property type="entry name" value="Probable inorganic polyphosphate/atp-NAD kinase, domain 1"/>
    <property type="match status" value="1"/>
</dbReference>
<dbReference type="Gene3D" id="2.60.200.30">
    <property type="entry name" value="Probable inorganic polyphosphate/atp-NAD kinase, domain 2"/>
    <property type="match status" value="1"/>
</dbReference>
<dbReference type="HAMAP" id="MF_00361">
    <property type="entry name" value="NAD_kinase"/>
    <property type="match status" value="1"/>
</dbReference>
<dbReference type="InterPro" id="IPR017438">
    <property type="entry name" value="ATP-NAD_kinase_N"/>
</dbReference>
<dbReference type="InterPro" id="IPR017437">
    <property type="entry name" value="ATP-NAD_kinase_PpnK-typ_C"/>
</dbReference>
<dbReference type="InterPro" id="IPR016064">
    <property type="entry name" value="NAD/diacylglycerol_kinase_sf"/>
</dbReference>
<dbReference type="InterPro" id="IPR002504">
    <property type="entry name" value="NADK"/>
</dbReference>
<dbReference type="NCBIfam" id="NF002731">
    <property type="entry name" value="PRK02645.1"/>
    <property type="match status" value="1"/>
</dbReference>
<dbReference type="PANTHER" id="PTHR20275">
    <property type="entry name" value="NAD KINASE"/>
    <property type="match status" value="1"/>
</dbReference>
<dbReference type="PANTHER" id="PTHR20275:SF0">
    <property type="entry name" value="NAD KINASE"/>
    <property type="match status" value="1"/>
</dbReference>
<dbReference type="Pfam" id="PF01513">
    <property type="entry name" value="NAD_kinase"/>
    <property type="match status" value="1"/>
</dbReference>
<dbReference type="Pfam" id="PF20143">
    <property type="entry name" value="NAD_kinase_C"/>
    <property type="match status" value="1"/>
</dbReference>
<dbReference type="SUPFAM" id="SSF111331">
    <property type="entry name" value="NAD kinase/diacylglycerol kinase-like"/>
    <property type="match status" value="1"/>
</dbReference>
<accession>Q46HL7</accession>
<protein>
    <recommendedName>
        <fullName evidence="1">NAD kinase 1</fullName>
        <ecNumber evidence="1">2.7.1.23</ecNumber>
    </recommendedName>
    <alternativeName>
        <fullName evidence="1">ATP-dependent NAD kinase 1</fullName>
    </alternativeName>
</protein>
<feature type="chain" id="PRO_0000229673" description="NAD kinase 1">
    <location>
        <begin position="1"/>
        <end position="302"/>
    </location>
</feature>
<feature type="active site" description="Proton acceptor" evidence="1">
    <location>
        <position position="67"/>
    </location>
</feature>
<feature type="binding site" evidence="1">
    <location>
        <begin position="67"/>
        <end position="68"/>
    </location>
    <ligand>
        <name>NAD(+)</name>
        <dbReference type="ChEBI" id="CHEBI:57540"/>
    </ligand>
</feature>
<feature type="binding site" evidence="1">
    <location>
        <position position="72"/>
    </location>
    <ligand>
        <name>NAD(+)</name>
        <dbReference type="ChEBI" id="CHEBI:57540"/>
    </ligand>
</feature>
<feature type="binding site" evidence="1">
    <location>
        <begin position="148"/>
        <end position="149"/>
    </location>
    <ligand>
        <name>NAD(+)</name>
        <dbReference type="ChEBI" id="CHEBI:57540"/>
    </ligand>
</feature>
<feature type="binding site" evidence="1">
    <location>
        <position position="178"/>
    </location>
    <ligand>
        <name>NAD(+)</name>
        <dbReference type="ChEBI" id="CHEBI:57540"/>
    </ligand>
</feature>
<feature type="binding site" evidence="1">
    <location>
        <position position="180"/>
    </location>
    <ligand>
        <name>NAD(+)</name>
        <dbReference type="ChEBI" id="CHEBI:57540"/>
    </ligand>
</feature>
<comment type="function">
    <text evidence="1">Involved in the regulation of the intracellular balance of NAD and NADP, and is a key enzyme in the biosynthesis of NADP. Catalyzes specifically the phosphorylation on 2'-hydroxyl of the adenosine moiety of NAD to yield NADP.</text>
</comment>
<comment type="catalytic activity">
    <reaction evidence="1">
        <text>NAD(+) + ATP = ADP + NADP(+) + H(+)</text>
        <dbReference type="Rhea" id="RHEA:18629"/>
        <dbReference type="ChEBI" id="CHEBI:15378"/>
        <dbReference type="ChEBI" id="CHEBI:30616"/>
        <dbReference type="ChEBI" id="CHEBI:57540"/>
        <dbReference type="ChEBI" id="CHEBI:58349"/>
        <dbReference type="ChEBI" id="CHEBI:456216"/>
        <dbReference type="EC" id="2.7.1.23"/>
    </reaction>
</comment>
<comment type="cofactor">
    <cofactor evidence="1">
        <name>a divalent metal cation</name>
        <dbReference type="ChEBI" id="CHEBI:60240"/>
    </cofactor>
</comment>
<comment type="subcellular location">
    <subcellularLocation>
        <location evidence="1">Cytoplasm</location>
    </subcellularLocation>
</comment>
<comment type="similarity">
    <text evidence="1">Belongs to the NAD kinase family.</text>
</comment>
<gene>
    <name evidence="1" type="primary">nadK1</name>
    <name type="ordered locus">PMN2A_1523</name>
</gene>
<name>NADK1_PROMT</name>
<sequence length="302" mass="33827">MTTNLIWILYRSDSDTAYKETLNCKKIIEGYGKKVLFSEISNETNNINQLFLKSEVLPEITIVLGGDGTVLRAARYLSPKNIPILSFNVGGNLGFLTHDRQILKQETFWERVSNNRFNIQKRMMLEATVFREKNNNENTIKKSFFALNDFYLRSCTDEIAPTCSLALEIDGEAVDRYKGDGLIFSTPTGSTAYSMAAGGPIIHPSLDAIIVSAICPMSLASRPIVVPPESQLVIKPIRGMKQKIKLWLDGSSGCLIEAEDTCLIKKSNHSTSIIILDENHSYYKTITQKLHWASSLNNPNKQ</sequence>
<proteinExistence type="inferred from homology"/>
<organism>
    <name type="scientific">Prochlorococcus marinus (strain NATL2A)</name>
    <dbReference type="NCBI Taxonomy" id="59920"/>
    <lineage>
        <taxon>Bacteria</taxon>
        <taxon>Bacillati</taxon>
        <taxon>Cyanobacteriota</taxon>
        <taxon>Cyanophyceae</taxon>
        <taxon>Synechococcales</taxon>
        <taxon>Prochlorococcaceae</taxon>
        <taxon>Prochlorococcus</taxon>
    </lineage>
</organism>
<keyword id="KW-0067">ATP-binding</keyword>
<keyword id="KW-0963">Cytoplasm</keyword>
<keyword id="KW-0418">Kinase</keyword>
<keyword id="KW-0520">NAD</keyword>
<keyword id="KW-0521">NADP</keyword>
<keyword id="KW-0547">Nucleotide-binding</keyword>
<keyword id="KW-1185">Reference proteome</keyword>
<keyword id="KW-0808">Transferase</keyword>
<reference key="1">
    <citation type="journal article" date="2007" name="PLoS Genet.">
        <title>Patterns and implications of gene gain and loss in the evolution of Prochlorococcus.</title>
        <authorList>
            <person name="Kettler G.C."/>
            <person name="Martiny A.C."/>
            <person name="Huang K."/>
            <person name="Zucker J."/>
            <person name="Coleman M.L."/>
            <person name="Rodrigue S."/>
            <person name="Chen F."/>
            <person name="Lapidus A."/>
            <person name="Ferriera S."/>
            <person name="Johnson J."/>
            <person name="Steglich C."/>
            <person name="Church G.M."/>
            <person name="Richardson P."/>
            <person name="Chisholm S.W."/>
        </authorList>
    </citation>
    <scope>NUCLEOTIDE SEQUENCE [LARGE SCALE GENOMIC DNA]</scope>
    <source>
        <strain>NATL2A</strain>
    </source>
</reference>
<evidence type="ECO:0000255" key="1">
    <source>
        <dbReference type="HAMAP-Rule" id="MF_00361"/>
    </source>
</evidence>